<dbReference type="EC" id="3.1.1.53" evidence="8 9"/>
<dbReference type="EMBL" id="AF300796">
    <property type="protein sequence ID" value="AAG15386.1"/>
    <property type="molecule type" value="mRNA"/>
</dbReference>
<dbReference type="EMBL" id="AF303378">
    <property type="protein sequence ID" value="AAG14897.1"/>
    <property type="molecule type" value="mRNA"/>
</dbReference>
<dbReference type="EMBL" id="AK056093">
    <property type="protein sequence ID" value="BAG51622.1"/>
    <property type="molecule type" value="mRNA"/>
</dbReference>
<dbReference type="EMBL" id="CH471065">
    <property type="protein sequence ID" value="EAW67591.1"/>
    <property type="molecule type" value="Genomic_DNA"/>
</dbReference>
<dbReference type="EMBL" id="BC068450">
    <property type="protein sequence ID" value="AAH68450.1"/>
    <property type="molecule type" value="mRNA"/>
</dbReference>
<dbReference type="EMBL" id="AL137496">
    <property type="protein sequence ID" value="CAB70771.1"/>
    <property type="molecule type" value="mRNA"/>
</dbReference>
<dbReference type="CCDS" id="CCDS55795.1">
    <molecule id="Q9HAT2-2"/>
</dbReference>
<dbReference type="CCDS" id="CCDS8449.1">
    <molecule id="Q9HAT2-1"/>
</dbReference>
<dbReference type="PIR" id="T46250">
    <property type="entry name" value="T46250"/>
</dbReference>
<dbReference type="RefSeq" id="NP_001186851.1">
    <molecule id="Q9HAT2-2"/>
    <property type="nucleotide sequence ID" value="NM_001199922.2"/>
</dbReference>
<dbReference type="RefSeq" id="NP_733746.1">
    <molecule id="Q9HAT2-1"/>
    <property type="nucleotide sequence ID" value="NM_170601.5"/>
</dbReference>
<dbReference type="SMR" id="Q9HAT2"/>
<dbReference type="BioGRID" id="119945">
    <property type="interactions" value="71"/>
</dbReference>
<dbReference type="FunCoup" id="Q9HAT2">
    <property type="interactions" value="185"/>
</dbReference>
<dbReference type="IntAct" id="Q9HAT2">
    <property type="interactions" value="39"/>
</dbReference>
<dbReference type="STRING" id="9606.ENSP00000263593"/>
<dbReference type="ChEMBL" id="CHEMBL4523459"/>
<dbReference type="GlyConnect" id="1742">
    <property type="glycosylation" value="4 N-Linked glycans (2 sites)"/>
</dbReference>
<dbReference type="GlyCosmos" id="Q9HAT2">
    <property type="glycosylation" value="7 sites, 5 glycans"/>
</dbReference>
<dbReference type="GlyGen" id="Q9HAT2">
    <property type="glycosylation" value="7 sites, 46 N-linked glycans (6 sites), 1 O-linked glycan (1 site)"/>
</dbReference>
<dbReference type="iPTMnet" id="Q9HAT2"/>
<dbReference type="PhosphoSitePlus" id="Q9HAT2"/>
<dbReference type="BioMuta" id="SIAE"/>
<dbReference type="DMDM" id="74734243"/>
<dbReference type="jPOST" id="Q9HAT2"/>
<dbReference type="MassIVE" id="Q9HAT2"/>
<dbReference type="PaxDb" id="9606-ENSP00000263593"/>
<dbReference type="PeptideAtlas" id="Q9HAT2"/>
<dbReference type="ProteomicsDB" id="81429">
    <molecule id="Q9HAT2-1"/>
</dbReference>
<dbReference type="ProteomicsDB" id="81430">
    <molecule id="Q9HAT2-2"/>
</dbReference>
<dbReference type="Pumba" id="Q9HAT2"/>
<dbReference type="Antibodypedia" id="32895">
    <property type="antibodies" value="63 antibodies from 17 providers"/>
</dbReference>
<dbReference type="DNASU" id="54414"/>
<dbReference type="Ensembl" id="ENST00000263593.8">
    <molecule id="Q9HAT2-1"/>
    <property type="protein sequence ID" value="ENSP00000263593.3"/>
    <property type="gene ID" value="ENSG00000110013.13"/>
</dbReference>
<dbReference type="Ensembl" id="ENST00000545756.5">
    <molecule id="Q9HAT2-2"/>
    <property type="protein sequence ID" value="ENSP00000437877.1"/>
    <property type="gene ID" value="ENSG00000110013.13"/>
</dbReference>
<dbReference type="Ensembl" id="ENST00000618733.4">
    <molecule id="Q9HAT2-2"/>
    <property type="protein sequence ID" value="ENSP00000478211.1"/>
    <property type="gene ID" value="ENSG00000110013.13"/>
</dbReference>
<dbReference type="GeneID" id="54414"/>
<dbReference type="KEGG" id="hsa:54414"/>
<dbReference type="MANE-Select" id="ENST00000263593.8">
    <property type="protein sequence ID" value="ENSP00000263593.3"/>
    <property type="RefSeq nucleotide sequence ID" value="NM_170601.5"/>
    <property type="RefSeq protein sequence ID" value="NP_733746.1"/>
</dbReference>
<dbReference type="UCSC" id="uc001qan.4">
    <molecule id="Q9HAT2-1"/>
    <property type="organism name" value="human"/>
</dbReference>
<dbReference type="AGR" id="HGNC:18187"/>
<dbReference type="CTD" id="54414"/>
<dbReference type="DisGeNET" id="54414"/>
<dbReference type="GeneCards" id="SIAE"/>
<dbReference type="HGNC" id="HGNC:18187">
    <property type="gene designation" value="SIAE"/>
</dbReference>
<dbReference type="HPA" id="ENSG00000110013">
    <property type="expression patterns" value="Tissue enhanced (intestine)"/>
</dbReference>
<dbReference type="MalaCards" id="SIAE"/>
<dbReference type="MIM" id="610079">
    <property type="type" value="gene"/>
</dbReference>
<dbReference type="MIM" id="613551">
    <property type="type" value="phenotype"/>
</dbReference>
<dbReference type="neXtProt" id="NX_Q9HAT2"/>
<dbReference type="OpenTargets" id="ENSG00000110013"/>
<dbReference type="PharmGKB" id="PA142670922"/>
<dbReference type="VEuPathDB" id="HostDB:ENSG00000110013"/>
<dbReference type="eggNOG" id="ENOG502QUKD">
    <property type="taxonomic scope" value="Eukaryota"/>
</dbReference>
<dbReference type="GeneTree" id="ENSGT00390000010608"/>
<dbReference type="HOGENOM" id="CLU_015150_1_0_1"/>
<dbReference type="InParanoid" id="Q9HAT2"/>
<dbReference type="OMA" id="PCEFKAC"/>
<dbReference type="OrthoDB" id="42638at2759"/>
<dbReference type="PAN-GO" id="Q9HAT2">
    <property type="GO annotations" value="2 GO annotations based on evolutionary models"/>
</dbReference>
<dbReference type="PhylomeDB" id="Q9HAT2"/>
<dbReference type="TreeFam" id="TF328611"/>
<dbReference type="BRENDA" id="3.1.1.53">
    <property type="organism ID" value="2681"/>
</dbReference>
<dbReference type="PathwayCommons" id="Q9HAT2"/>
<dbReference type="SignaLink" id="Q9HAT2"/>
<dbReference type="BioGRID-ORCS" id="54414">
    <property type="hits" value="12 hits in 1161 CRISPR screens"/>
</dbReference>
<dbReference type="ChiTaRS" id="SIAE">
    <property type="organism name" value="human"/>
</dbReference>
<dbReference type="GenomeRNAi" id="54414"/>
<dbReference type="Pharos" id="Q9HAT2">
    <property type="development level" value="Tbio"/>
</dbReference>
<dbReference type="PRO" id="PR:Q9HAT2"/>
<dbReference type="Proteomes" id="UP000005640">
    <property type="component" value="Chromosome 11"/>
</dbReference>
<dbReference type="RNAct" id="Q9HAT2">
    <property type="molecule type" value="Protein"/>
</dbReference>
<dbReference type="Bgee" id="ENSG00000110013">
    <property type="expression patterns" value="Expressed in mucosa of sigmoid colon and 179 other cell types or tissues"/>
</dbReference>
<dbReference type="GO" id="GO:0070062">
    <property type="term" value="C:extracellular exosome"/>
    <property type="evidence" value="ECO:0007005"/>
    <property type="project" value="UniProtKB"/>
</dbReference>
<dbReference type="GO" id="GO:0005615">
    <property type="term" value="C:extracellular space"/>
    <property type="evidence" value="ECO:0007005"/>
    <property type="project" value="UniProtKB"/>
</dbReference>
<dbReference type="GO" id="GO:0005764">
    <property type="term" value="C:lysosome"/>
    <property type="evidence" value="ECO:0007669"/>
    <property type="project" value="UniProtKB-SubCell"/>
</dbReference>
<dbReference type="GO" id="GO:0106330">
    <property type="term" value="F:sialate 9-O-acetylesterase activity"/>
    <property type="evidence" value="ECO:0007669"/>
    <property type="project" value="RHEA"/>
</dbReference>
<dbReference type="GO" id="GO:0001681">
    <property type="term" value="F:sialate O-acetylesterase activity"/>
    <property type="evidence" value="ECO:0000314"/>
    <property type="project" value="UniProtKB"/>
</dbReference>
<dbReference type="GO" id="GO:0005975">
    <property type="term" value="P:carbohydrate metabolic process"/>
    <property type="evidence" value="ECO:0000314"/>
    <property type="project" value="UniProtKB"/>
</dbReference>
<dbReference type="GO" id="GO:0002682">
    <property type="term" value="P:regulation of immune system process"/>
    <property type="evidence" value="ECO:0000315"/>
    <property type="project" value="UniProtKB"/>
</dbReference>
<dbReference type="FunFam" id="3.40.50.1110:FF:000008">
    <property type="entry name" value="Sialate O-acetylesterase"/>
    <property type="match status" value="1"/>
</dbReference>
<dbReference type="Gene3D" id="3.40.50.1110">
    <property type="entry name" value="SGNH hydrolase"/>
    <property type="match status" value="1"/>
</dbReference>
<dbReference type="InterPro" id="IPR005181">
    <property type="entry name" value="SASA"/>
</dbReference>
<dbReference type="InterPro" id="IPR036514">
    <property type="entry name" value="SGNH_hydro_sf"/>
</dbReference>
<dbReference type="InterPro" id="IPR039329">
    <property type="entry name" value="SIAE"/>
</dbReference>
<dbReference type="PANTHER" id="PTHR22901">
    <property type="entry name" value="SIALATE O-ACETYLESTERASE"/>
    <property type="match status" value="1"/>
</dbReference>
<dbReference type="PANTHER" id="PTHR22901:SF0">
    <property type="entry name" value="SIALATE O-ACETYLESTERASE"/>
    <property type="match status" value="1"/>
</dbReference>
<dbReference type="Pfam" id="PF03629">
    <property type="entry name" value="SASA"/>
    <property type="match status" value="1"/>
</dbReference>
<dbReference type="SUPFAM" id="SSF52266">
    <property type="entry name" value="SGNH hydrolase"/>
    <property type="match status" value="1"/>
</dbReference>
<comment type="function">
    <text evidence="5 8 9">Catalyzes the removal of O-acetyl ester groups from position 9 of the free diacetylated sialate N-acetyl-9-O-acetylneuraminate (Neu5,9Ac2) in the cytosol and of the diacetylated sialate residues of sialylglycoconjugates in the lysosomes (Probable). Together with the sialate-O-acetyltransferase they regulate the balance of acetylated sialoglycoconjugates, key players in various processes such as cell-cell interactions, host-pathogen recognition, and tumor antigenicity (PubMed:21803834).</text>
</comment>
<comment type="catalytic activity">
    <molecule>Isoform 2</molecule>
    <reaction evidence="8 9">
        <text>N-acetyl-9-O-acetylneuraminate + H2O = N-acetylneuraminate + acetate + H(+)</text>
        <dbReference type="Rhea" id="RHEA:22600"/>
        <dbReference type="ChEBI" id="CHEBI:15377"/>
        <dbReference type="ChEBI" id="CHEBI:15378"/>
        <dbReference type="ChEBI" id="CHEBI:28999"/>
        <dbReference type="ChEBI" id="CHEBI:30089"/>
        <dbReference type="ChEBI" id="CHEBI:35418"/>
        <dbReference type="EC" id="3.1.1.53"/>
    </reaction>
    <physiologicalReaction direction="left-to-right" evidence="8 9">
        <dbReference type="Rhea" id="RHEA:22601"/>
    </physiologicalReaction>
</comment>
<comment type="catalytic activity">
    <molecule>Isoform 1</molecule>
    <reaction evidence="9">
        <text>an Ac-O-9-sialoglycoconjugate + H2O = a sialoglycoconjugate + acetate + H(+)</text>
        <dbReference type="Rhea" id="RHEA:80763"/>
        <dbReference type="ChEBI" id="CHEBI:15377"/>
        <dbReference type="ChEBI" id="CHEBI:15378"/>
        <dbReference type="ChEBI" id="CHEBI:30089"/>
        <dbReference type="ChEBI" id="CHEBI:231691"/>
        <dbReference type="ChEBI" id="CHEBI:231692"/>
    </reaction>
    <physiologicalReaction direction="left-to-right" evidence="9">
        <dbReference type="Rhea" id="RHEA:80764"/>
    </physiologicalReaction>
</comment>
<comment type="interaction">
    <interactant intactId="EBI-2908303">
        <id>Q9HAT2</id>
    </interactant>
    <interactant intactId="EBI-4287196">
        <id>Q9UK22</id>
        <label>FBXO2</label>
    </interactant>
    <organismsDiffer>false</organismsDiffer>
    <experiments>2</experiments>
</comment>
<comment type="subcellular location">
    <molecule>Isoform 1</molecule>
    <subcellularLocation>
        <location evidence="2 5">Lysosome</location>
    </subcellularLocation>
</comment>
<comment type="subcellular location">
    <molecule>Isoform 2</molecule>
    <subcellularLocation>
        <location evidence="5">Cytoplasm</location>
    </subcellularLocation>
</comment>
<comment type="alternative products">
    <event type="alternative splicing"/>
    <isoform>
        <id>Q9HAT2-1</id>
        <name>1</name>
        <sequence type="displayed"/>
    </isoform>
    <isoform>
        <id>Q9HAT2-2</id>
        <name>2</name>
        <sequence type="described" ref="VSP_018993"/>
    </isoform>
</comment>
<comment type="tissue specificity">
    <text evidence="2">Widely expressed with high expression in the testis, prostate, and colon.</text>
</comment>
<comment type="disease" evidence="4">
    <disease id="DI-02927">
        <name>Autoimmune disease 6</name>
        <acronym>AIS6</acronym>
        <description>Individuals manifesting susceptibility to autoimmune disease type 6 can suffer from juvenile idiopathic arthritis, rheumatoid arthritis, multiple sclerosis, Sjogren syndrome, systemic lupus erythematosus, type 1 diabetes, ulcerative colitis, and Crohn disease.</description>
        <dbReference type="MIM" id="613551"/>
    </disease>
    <text>Disease susceptibility is associated with variants affecting the gene represented in this entry.</text>
</comment>
<keyword id="KW-0025">Alternative splicing</keyword>
<keyword id="KW-0963">Cytoplasm</keyword>
<keyword id="KW-0225">Disease variant</keyword>
<keyword id="KW-0325">Glycoprotein</keyword>
<keyword id="KW-0378">Hydrolase</keyword>
<keyword id="KW-0458">Lysosome</keyword>
<keyword id="KW-1267">Proteomics identification</keyword>
<keyword id="KW-1185">Reference proteome</keyword>
<keyword id="KW-0719">Serine esterase</keyword>
<keyword id="KW-0732">Signal</keyword>
<name>SIAE_HUMAN</name>
<organism>
    <name type="scientific">Homo sapiens</name>
    <name type="common">Human</name>
    <dbReference type="NCBI Taxonomy" id="9606"/>
    <lineage>
        <taxon>Eukaryota</taxon>
        <taxon>Metazoa</taxon>
        <taxon>Chordata</taxon>
        <taxon>Craniata</taxon>
        <taxon>Vertebrata</taxon>
        <taxon>Euteleostomi</taxon>
        <taxon>Mammalia</taxon>
        <taxon>Eutheria</taxon>
        <taxon>Euarchontoglires</taxon>
        <taxon>Primates</taxon>
        <taxon>Haplorrhini</taxon>
        <taxon>Catarrhini</taxon>
        <taxon>Hominidae</taxon>
        <taxon>Homo</taxon>
    </lineage>
</organism>
<proteinExistence type="evidence at protein level"/>
<feature type="signal peptide" evidence="1">
    <location>
        <begin position="1"/>
        <end position="23"/>
    </location>
</feature>
<feature type="chain" id="PRO_0000042241" description="Sialate O-acetylesterase">
    <location>
        <begin position="24"/>
        <end position="523"/>
    </location>
</feature>
<feature type="glycosylation site" description="N-linked (GlcNAc...) asparagine" evidence="1">
    <location>
        <position position="107"/>
    </location>
</feature>
<feature type="glycosylation site" description="N-linked (GlcNAc...) asparagine" evidence="1">
    <location>
        <position position="138"/>
    </location>
</feature>
<feature type="glycosylation site" description="N-linked (GlcNAc...) asparagine" evidence="1">
    <location>
        <position position="267"/>
    </location>
</feature>
<feature type="glycosylation site" description="N-linked (GlcNAc...) asparagine" evidence="1">
    <location>
        <position position="290"/>
    </location>
</feature>
<feature type="glycosylation site" description="N-linked (GlcNAc...) asparagine" evidence="3">
    <location>
        <position position="401"/>
    </location>
</feature>
<feature type="glycosylation site" description="N-linked (GlcNAc...) asparagine" evidence="3">
    <location>
        <position position="422"/>
    </location>
</feature>
<feature type="splice variant" id="VSP_018993" description="In isoform 2." evidence="6">
    <location>
        <begin position="1"/>
        <end position="35"/>
    </location>
</feature>
<feature type="sequence variant" id="VAR_064438" description="Rare variant found in a patient with Crohn disease; probably not involved in disease susceptibility; the mutant enzyme has normal activity and is normally secreted; dbSNP:rs144571829." evidence="4">
    <original>A</original>
    <variation>G</variation>
    <location>
        <position position="3"/>
    </location>
</feature>
<feature type="sequence variant" id="VAR_064439" description="Rare variant found in a patient with rheumatoid arthritis; probably not involved in disease susceptibility; the mutant enzyme has normal activity and is normally secreted; dbSNP:rs762824510." evidence="4">
    <original>N</original>
    <variation>S</variation>
    <location>
        <position position="33"/>
    </location>
</feature>
<feature type="sequence variant" id="VAR_064440" description="The mutant enzyme has normal activity and is normally secreted; dbSNP:rs377634657." evidence="4">
    <original>R</original>
    <variation>H</variation>
    <location>
        <position position="62"/>
    </location>
</feature>
<feature type="sequence variant" id="VAR_064441" description="The mutant enzyme has normal activity and is normally secreted; dbSNP:rs76655561." evidence="4">
    <original>G</original>
    <variation>S</variation>
    <location>
        <position position="64"/>
    </location>
</feature>
<feature type="sequence variant" id="VAR_051356" description="In dbSNP:rs12282107." evidence="4">
    <original>K</original>
    <variation>R</variation>
    <location>
        <position position="71"/>
    </location>
</feature>
<feature type="sequence variant" id="VAR_064442" description="At homozygosity may predispose to autoimmunity; normal enzyme activity; dbSNP:rs78778622." evidence="4">
    <original>M</original>
    <variation>V</variation>
    <location>
        <position position="89"/>
    </location>
</feature>
<feature type="sequence variant" id="VAR_064443" description="The mutant enzyme has normal activity and is normally secreted; dbSNP:rs200739060." evidence="4">
    <original>Q</original>
    <variation>K</variation>
    <location>
        <position position="161"/>
    </location>
</feature>
<feature type="sequence variant" id="VAR_064444" description="In AIS6; defective enzyme secretion and activity; dbSNP:rs143070599." evidence="4">
    <original>C</original>
    <variation>F</variation>
    <location>
        <position position="196"/>
    </location>
</feature>
<feature type="sequence variant" id="VAR_064445" description="In AIS6; defective enzyme secretion and activity; dbSNP:rs149466359." evidence="4">
    <original>G</original>
    <variation>R</variation>
    <location>
        <position position="212"/>
    </location>
</feature>
<feature type="sequence variant" id="VAR_064446" description="In AIS6; defective enzyme secretion and activity; dbSNP:rs200862001." evidence="4">
    <original>R</original>
    <variation>W</variation>
    <location>
        <position position="230"/>
    </location>
</feature>
<feature type="sequence variant" id="VAR_064447" description="In AIS6; defective enzyme secretion and activity; dbSNP:rs746914032." evidence="4">
    <original>C</original>
    <variation>G</variation>
    <location>
        <position position="266"/>
    </location>
</feature>
<feature type="sequence variant" id="VAR_064448" description="In AIS6; defective enzyme secretion and activity; dbSNP:rs757586703." evidence="4">
    <original>Q</original>
    <variation>P</variation>
    <location>
        <position position="309"/>
    </location>
</feature>
<feature type="sequence variant" id="VAR_064449" description="May predispose to autoimmunity; defective enzyme secretion and activity; dbSNP:rs144510878." evidence="4">
    <original>T</original>
    <variation>M</variation>
    <location>
        <position position="312"/>
    </location>
</feature>
<feature type="sequence variant" id="VAR_064450" description="Defective enzyme secretion and activity; dbSNP:rs147649509." evidence="4">
    <original>R</original>
    <variation>H</variation>
    <location>
        <position position="314"/>
    </location>
</feature>
<feature type="sequence variant" id="VAR_064451" description="In AIS6; defective enzyme secretion and activity; dbSNP:rs749579541." evidence="4">
    <original>Y</original>
    <variation>C</variation>
    <location>
        <position position="349"/>
    </location>
</feature>
<feature type="sequence variant" id="VAR_064452" description="In AIS6; defective enzyme secretion and activity; dbSNP:rs552372846." evidence="4">
    <original>R</original>
    <variation>H</variation>
    <location>
        <position position="393"/>
    </location>
</feature>
<feature type="sequence variant" id="VAR_064453" description="Rare variant found in a patient with Crohn disease; probably not involved in disease susceptibility; the mutant protein has normal activity; dbSNP:rs766047951." evidence="4">
    <original>K</original>
    <variation>N</variation>
    <location>
        <position position="400"/>
    </location>
</feature>
<feature type="sequence variant" id="VAR_064454" description="In AIS6; defective enzyme secretion and activity; dbSNP:rs201877149." evidence="4">
    <original>F</original>
    <variation>S</variation>
    <location>
        <position position="404"/>
    </location>
</feature>
<feature type="sequence variant" id="VAR_064455" description="The mutant enzyme has normal activity and is normally secreted; dbSNP:rs147161431." evidence="4">
    <original>H</original>
    <variation>R</variation>
    <location>
        <position position="447"/>
    </location>
</feature>
<feature type="sequence variant" id="VAR_064456" description="The mutant enzyme has normal activity and is normally secreted; dbSNP:rs1942761601." evidence="4">
    <original>M</original>
    <variation>I</variation>
    <location>
        <position position="456"/>
    </location>
</feature>
<feature type="sequence variant" id="VAR_064457" description="The mutant enzyme has normal activity and is normally secreted; dbSNP:rs143668140." evidence="4">
    <original>Q</original>
    <variation>R</variation>
    <location>
        <position position="462"/>
    </location>
</feature>
<feature type="sequence variant" id="VAR_051357" description="In dbSNP:rs7941523.">
    <original>A</original>
    <variation>V</variation>
    <location>
        <position position="467"/>
    </location>
</feature>
<feature type="sequence variant" id="VAR_064458" description="In AIS6; defective enzyme secretion and activity; dbSNP:rs376857712." evidence="4">
    <original>R</original>
    <variation>C</variation>
    <location>
        <position position="479"/>
    </location>
</feature>
<reference key="1">
    <citation type="journal article" date="2004" name="J. Biomed. Biotechnol.">
        <title>A gene encoding sialic-acid-specific 9-O-acetylesterase found in human adult testis.</title>
        <authorList>
            <person name="Zhu H."/>
            <person name="Chan H.C."/>
            <person name="Zhou Z."/>
            <person name="Li J.M."/>
            <person name="Zhu H."/>
            <person name="Yin L."/>
            <person name="Xu M."/>
            <person name="Cheng L."/>
            <person name="Sha J.H."/>
        </authorList>
    </citation>
    <scope>NUCLEOTIDE SEQUENCE [MRNA] (ISOFORMS 1 AND 2)</scope>
    <scope>SUBCELLULAR LOCATION (ISOFORM 1)</scope>
    <scope>TISSUE SPECIFICITY</scope>
    <source>
        <tissue>Testis</tissue>
    </source>
</reference>
<reference key="2">
    <citation type="journal article" date="2004" name="Nat. Genet.">
        <title>Complete sequencing and characterization of 21,243 full-length human cDNAs.</title>
        <authorList>
            <person name="Ota T."/>
            <person name="Suzuki Y."/>
            <person name="Nishikawa T."/>
            <person name="Otsuki T."/>
            <person name="Sugiyama T."/>
            <person name="Irie R."/>
            <person name="Wakamatsu A."/>
            <person name="Hayashi K."/>
            <person name="Sato H."/>
            <person name="Nagai K."/>
            <person name="Kimura K."/>
            <person name="Makita H."/>
            <person name="Sekine M."/>
            <person name="Obayashi M."/>
            <person name="Nishi T."/>
            <person name="Shibahara T."/>
            <person name="Tanaka T."/>
            <person name="Ishii S."/>
            <person name="Yamamoto J."/>
            <person name="Saito K."/>
            <person name="Kawai Y."/>
            <person name="Isono Y."/>
            <person name="Nakamura Y."/>
            <person name="Nagahari K."/>
            <person name="Murakami K."/>
            <person name="Yasuda T."/>
            <person name="Iwayanagi T."/>
            <person name="Wagatsuma M."/>
            <person name="Shiratori A."/>
            <person name="Sudo H."/>
            <person name="Hosoiri T."/>
            <person name="Kaku Y."/>
            <person name="Kodaira H."/>
            <person name="Kondo H."/>
            <person name="Sugawara M."/>
            <person name="Takahashi M."/>
            <person name="Kanda K."/>
            <person name="Yokoi T."/>
            <person name="Furuya T."/>
            <person name="Kikkawa E."/>
            <person name="Omura Y."/>
            <person name="Abe K."/>
            <person name="Kamihara K."/>
            <person name="Katsuta N."/>
            <person name="Sato K."/>
            <person name="Tanikawa M."/>
            <person name="Yamazaki M."/>
            <person name="Ninomiya K."/>
            <person name="Ishibashi T."/>
            <person name="Yamashita H."/>
            <person name="Murakawa K."/>
            <person name="Fujimori K."/>
            <person name="Tanai H."/>
            <person name="Kimata M."/>
            <person name="Watanabe M."/>
            <person name="Hiraoka S."/>
            <person name="Chiba Y."/>
            <person name="Ishida S."/>
            <person name="Ono Y."/>
            <person name="Takiguchi S."/>
            <person name="Watanabe S."/>
            <person name="Yosida M."/>
            <person name="Hotuta T."/>
            <person name="Kusano J."/>
            <person name="Kanehori K."/>
            <person name="Takahashi-Fujii A."/>
            <person name="Hara H."/>
            <person name="Tanase T.-O."/>
            <person name="Nomura Y."/>
            <person name="Togiya S."/>
            <person name="Komai F."/>
            <person name="Hara R."/>
            <person name="Takeuchi K."/>
            <person name="Arita M."/>
            <person name="Imose N."/>
            <person name="Musashino K."/>
            <person name="Yuuki H."/>
            <person name="Oshima A."/>
            <person name="Sasaki N."/>
            <person name="Aotsuka S."/>
            <person name="Yoshikawa Y."/>
            <person name="Matsunawa H."/>
            <person name="Ichihara T."/>
            <person name="Shiohata N."/>
            <person name="Sano S."/>
            <person name="Moriya S."/>
            <person name="Momiyama H."/>
            <person name="Satoh N."/>
            <person name="Takami S."/>
            <person name="Terashima Y."/>
            <person name="Suzuki O."/>
            <person name="Nakagawa S."/>
            <person name="Senoh A."/>
            <person name="Mizoguchi H."/>
            <person name="Goto Y."/>
            <person name="Shimizu F."/>
            <person name="Wakebe H."/>
            <person name="Hishigaki H."/>
            <person name="Watanabe T."/>
            <person name="Sugiyama A."/>
            <person name="Takemoto M."/>
            <person name="Kawakami B."/>
            <person name="Yamazaki M."/>
            <person name="Watanabe K."/>
            <person name="Kumagai A."/>
            <person name="Itakura S."/>
            <person name="Fukuzumi Y."/>
            <person name="Fujimori Y."/>
            <person name="Komiyama M."/>
            <person name="Tashiro H."/>
            <person name="Tanigami A."/>
            <person name="Fujiwara T."/>
            <person name="Ono T."/>
            <person name="Yamada K."/>
            <person name="Fujii Y."/>
            <person name="Ozaki K."/>
            <person name="Hirao M."/>
            <person name="Ohmori Y."/>
            <person name="Kawabata A."/>
            <person name="Hikiji T."/>
            <person name="Kobatake N."/>
            <person name="Inagaki H."/>
            <person name="Ikema Y."/>
            <person name="Okamoto S."/>
            <person name="Okitani R."/>
            <person name="Kawakami T."/>
            <person name="Noguchi S."/>
            <person name="Itoh T."/>
            <person name="Shigeta K."/>
            <person name="Senba T."/>
            <person name="Matsumura K."/>
            <person name="Nakajima Y."/>
            <person name="Mizuno T."/>
            <person name="Morinaga M."/>
            <person name="Sasaki M."/>
            <person name="Togashi T."/>
            <person name="Oyama M."/>
            <person name="Hata H."/>
            <person name="Watanabe M."/>
            <person name="Komatsu T."/>
            <person name="Mizushima-Sugano J."/>
            <person name="Satoh T."/>
            <person name="Shirai Y."/>
            <person name="Takahashi Y."/>
            <person name="Nakagawa K."/>
            <person name="Okumura K."/>
            <person name="Nagase T."/>
            <person name="Nomura N."/>
            <person name="Kikuchi H."/>
            <person name="Masuho Y."/>
            <person name="Yamashita R."/>
            <person name="Nakai K."/>
            <person name="Yada T."/>
            <person name="Nakamura Y."/>
            <person name="Ohara O."/>
            <person name="Isogai T."/>
            <person name="Sugano S."/>
        </authorList>
    </citation>
    <scope>NUCLEOTIDE SEQUENCE [LARGE SCALE MRNA] (ISOFORM 1)</scope>
</reference>
<reference key="3">
    <citation type="submission" date="2005-07" db="EMBL/GenBank/DDBJ databases">
        <authorList>
            <person name="Mural R.J."/>
            <person name="Istrail S."/>
            <person name="Sutton G.G."/>
            <person name="Florea L."/>
            <person name="Halpern A.L."/>
            <person name="Mobarry C.M."/>
            <person name="Lippert R."/>
            <person name="Walenz B."/>
            <person name="Shatkay H."/>
            <person name="Dew I."/>
            <person name="Miller J.R."/>
            <person name="Flanigan M.J."/>
            <person name="Edwards N.J."/>
            <person name="Bolanos R."/>
            <person name="Fasulo D."/>
            <person name="Halldorsson B.V."/>
            <person name="Hannenhalli S."/>
            <person name="Turner R."/>
            <person name="Yooseph S."/>
            <person name="Lu F."/>
            <person name="Nusskern D.R."/>
            <person name="Shue B.C."/>
            <person name="Zheng X.H."/>
            <person name="Zhong F."/>
            <person name="Delcher A.L."/>
            <person name="Huson D.H."/>
            <person name="Kravitz S.A."/>
            <person name="Mouchard L."/>
            <person name="Reinert K."/>
            <person name="Remington K.A."/>
            <person name="Clark A.G."/>
            <person name="Waterman M.S."/>
            <person name="Eichler E.E."/>
            <person name="Adams M.D."/>
            <person name="Hunkapiller M.W."/>
            <person name="Myers E.W."/>
            <person name="Venter J.C."/>
        </authorList>
    </citation>
    <scope>NUCLEOTIDE SEQUENCE [LARGE SCALE GENOMIC DNA]</scope>
</reference>
<reference key="4">
    <citation type="journal article" date="2004" name="Genome Res.">
        <title>The status, quality, and expansion of the NIH full-length cDNA project: the Mammalian Gene Collection (MGC).</title>
        <authorList>
            <consortium name="The MGC Project Team"/>
        </authorList>
    </citation>
    <scope>NUCLEOTIDE SEQUENCE [LARGE SCALE MRNA] (ISOFORM 1)</scope>
    <source>
        <tissue>Hypothalamus</tissue>
    </source>
</reference>
<reference key="5">
    <citation type="journal article" date="2007" name="BMC Genomics">
        <title>The full-ORF clone resource of the German cDNA consortium.</title>
        <authorList>
            <person name="Bechtel S."/>
            <person name="Rosenfelder H."/>
            <person name="Duda A."/>
            <person name="Schmidt C.P."/>
            <person name="Ernst U."/>
            <person name="Wellenreuther R."/>
            <person name="Mehrle A."/>
            <person name="Schuster C."/>
            <person name="Bahr A."/>
            <person name="Bloecker H."/>
            <person name="Heubner D."/>
            <person name="Hoerlein A."/>
            <person name="Michel G."/>
            <person name="Wedler H."/>
            <person name="Koehrer K."/>
            <person name="Ottenwaelder B."/>
            <person name="Poustka A."/>
            <person name="Wiemann S."/>
            <person name="Schupp I."/>
        </authorList>
    </citation>
    <scope>NUCLEOTIDE SEQUENCE [LARGE SCALE MRNA] OF 3-523 (ISOFORM 1)</scope>
    <source>
        <tissue>Amygdala</tissue>
    </source>
</reference>
<reference key="6">
    <citation type="journal article" date="2012" name="Glycobiology">
        <title>Regulation of O-acetylation of sialic acids by sialate-O-acetyltransferase and sialate-O-acetylesterase activities in childhood acute lymphoblastic leukemia.</title>
        <authorList>
            <person name="Mandal C."/>
            <person name="Mandal C."/>
            <person name="Chandra S."/>
            <person name="Schauer R."/>
            <person name="Mandal C."/>
        </authorList>
    </citation>
    <scope>FUNCTION</scope>
    <scope>CATALYTIC ACTIVITY</scope>
    <scope>SUBCELLULAR LOCATION (ISOFORM 1 AND ISOFORM 2)</scope>
</reference>
<reference key="7">
    <citation type="journal article" date="2009" name="J. Proteome Res.">
        <title>Glycoproteomics analysis of human liver tissue by combination of multiple enzyme digestion and hydrazide chemistry.</title>
        <authorList>
            <person name="Chen R."/>
            <person name="Jiang X."/>
            <person name="Sun D."/>
            <person name="Han G."/>
            <person name="Wang F."/>
            <person name="Ye M."/>
            <person name="Wang L."/>
            <person name="Zou H."/>
        </authorList>
    </citation>
    <scope>GLYCOSYLATION [LARGE SCALE ANALYSIS] AT ASN-401 AND ASN-422</scope>
    <source>
        <tissue>Liver</tissue>
    </source>
</reference>
<reference key="8">
    <citation type="journal article" date="2010" name="Nature">
        <title>Functionally defective germline variants of sialic acid acetylesterase in autoimmunity.</title>
        <authorList>
            <person name="Surolia I."/>
            <person name="Pirnie S.P."/>
            <person name="Chellappa V."/>
            <person name="Taylor K.N."/>
            <person name="Cariappa A."/>
            <person name="Moya J."/>
            <person name="Liu H."/>
            <person name="Bell D.W."/>
            <person name="Driscoll D.R."/>
            <person name="Diederichs S."/>
            <person name="Haider K."/>
            <person name="Netravali I."/>
            <person name="Le S."/>
            <person name="Elia R."/>
            <person name="Dow E."/>
            <person name="Lee A."/>
            <person name="Freudenberg J."/>
            <person name="De Jager P.L."/>
            <person name="Chretien Y."/>
            <person name="Varki A."/>
            <person name="Macdonald M.E."/>
            <person name="Gillis T."/>
            <person name="Behrens T.W."/>
            <person name="Bloch D."/>
            <person name="Collier D."/>
            <person name="Korzenik J."/>
            <person name="Podolsky D.K."/>
            <person name="Hafler D."/>
            <person name="Murali M."/>
            <person name="Sands B."/>
            <person name="Stone J.H."/>
            <person name="Gregersen P.K."/>
            <person name="Pillai S."/>
        </authorList>
    </citation>
    <scope>SUBCELLULAR LOCATION</scope>
    <scope>FUNCTION</scope>
    <scope>CATALYTIC ACTIVITY</scope>
    <scope>VARIANTS AIS6 PHE-196; ARG-212; TRP-230; GLY-266; PRO-309; CYS-349; HIS-393; SER-404 AND CYS-479</scope>
    <scope>VARIANTS GLY-3; SER-33; HIS-62; SER-64; ARG-71; VAL-89; LYS-161; MET-312; HIS-314; ASN-400; ARG-447; ILE-456 AND ARG-462</scope>
    <scope>CHARACTERIZATION OF VARIANTS AIS6 PHE-196; ARG-212; TRP-230; GLY-266; PRO-309; CYS-349; HIS-393; SER-404 AND CYS-479</scope>
    <scope>CHARACTERIZATION OF VARIANTS GLY-3; SER-33; HIS-62; SER-64; VAL-89; LYS-161; MET-312; HIS-314; ASN-400; ARG-447; ILE-456 AND ARG-462</scope>
</reference>
<reference key="9">
    <citation type="journal article" date="2014" name="J. Proteomics">
        <title>An enzyme assisted RP-RPLC approach for in-depth analysis of human liver phosphoproteome.</title>
        <authorList>
            <person name="Bian Y."/>
            <person name="Song C."/>
            <person name="Cheng K."/>
            <person name="Dong M."/>
            <person name="Wang F."/>
            <person name="Huang J."/>
            <person name="Sun D."/>
            <person name="Wang L."/>
            <person name="Ye M."/>
            <person name="Zou H."/>
        </authorList>
    </citation>
    <scope>IDENTIFICATION BY MASS SPECTROMETRY [LARGE SCALE ANALYSIS]</scope>
    <source>
        <tissue>Liver</tissue>
    </source>
</reference>
<evidence type="ECO:0000255" key="1"/>
<evidence type="ECO:0000269" key="2">
    <source>
    </source>
</evidence>
<evidence type="ECO:0000269" key="3">
    <source>
    </source>
</evidence>
<evidence type="ECO:0000269" key="4">
    <source>
    </source>
</evidence>
<evidence type="ECO:0000269" key="5">
    <source>
    </source>
</evidence>
<evidence type="ECO:0000303" key="6">
    <source>
    </source>
</evidence>
<evidence type="ECO:0000303" key="7">
    <source>
    </source>
</evidence>
<evidence type="ECO:0000305" key="8">
    <source>
    </source>
</evidence>
<evidence type="ECO:0000305" key="9">
    <source>
    </source>
</evidence>
<protein>
    <recommendedName>
        <fullName evidence="7">Sialate O-acetylesterase</fullName>
        <shortName evidence="7">SIAE</shortName>
        <ecNumber evidence="8 9">3.1.1.53</ecNumber>
    </recommendedName>
    <alternativeName>
        <fullName>H-Lse</fullName>
    </alternativeName>
    <alternativeName>
        <fullName>Sialic acid-specific 9-O-acetylesterase</fullName>
    </alternativeName>
</protein>
<accession>Q9HAT2</accession>
<accession>B3KPB0</accession>
<accession>Q8IUT9</accession>
<accession>Q9HAU7</accession>
<accession>Q9NT71</accession>
<sequence length="523" mass="58315">MVAPGLVLGLVLPLILWADRSAGIGFRFASYINNDMVLQKEPAGAVIWGFGTPGATVTVTLRQGQETIMKKVTSVKAHSDTWMVVLDPMKPGGPFEVMAQQTLEKINFTLRVHDVLFGDVWLCSGQSNMQMTVLQIFNATRELSNTAAYQSVRILSVSPIQAEQELEDLVAVDLQWSKPTSENLGHGYFKYMSAVCWLFGRHLYDTLQYPIGLIASSWGGTPIEAWSSGRSLKACGVPKQGSIPYDSVTGPSKHSVLWNAMIHPLCNMTLKGVVWYQGESNINYNTDLYNCTFPALIEDWRETFHRGSQGQTERFFPFGLVQLSSDLSKKSSDDGFPQIRWHQTADFGYVPNPKMPNTFMAVAMDLCDRDSPFGSIHPRDKQTVAYRLHLGARALAYGEKNLTFEGPLPEKIELLAHKGLLNLTYYQQIQVQKKDNKIFEISCCSDHRCKWLPASMNTVSTQSLTLAIDSCHGTVVALRYAWTTWPCEYKQCPLYHPSSALPAPPFIAFITDQGPGHQSNVAK</sequence>
<gene>
    <name type="primary">SIAE</name>
    <name type="synonym">YSG2</name>
</gene>